<gene>
    <name type="primary">MT-CYB</name>
    <name type="synonym">COB</name>
    <name type="synonym">CYTB</name>
    <name type="synonym">MTCYB</name>
</gene>
<geneLocation type="mitochondrion"/>
<proteinExistence type="inferred from homology"/>
<accession>Q950C7</accession>
<feature type="chain" id="PRO_0000060807" description="Cytochrome b">
    <location>
        <begin position="1"/>
        <end position="380"/>
    </location>
</feature>
<feature type="transmembrane region" description="Helical" evidence="2">
    <location>
        <begin position="34"/>
        <end position="54"/>
    </location>
</feature>
<feature type="transmembrane region" description="Helical" evidence="2">
    <location>
        <begin position="78"/>
        <end position="99"/>
    </location>
</feature>
<feature type="transmembrane region" description="Helical" evidence="2">
    <location>
        <begin position="114"/>
        <end position="134"/>
    </location>
</feature>
<feature type="transmembrane region" description="Helical" evidence="2">
    <location>
        <begin position="179"/>
        <end position="199"/>
    </location>
</feature>
<feature type="transmembrane region" description="Helical" evidence="2">
    <location>
        <begin position="227"/>
        <end position="247"/>
    </location>
</feature>
<feature type="transmembrane region" description="Helical" evidence="2">
    <location>
        <begin position="289"/>
        <end position="309"/>
    </location>
</feature>
<feature type="transmembrane region" description="Helical" evidence="2">
    <location>
        <begin position="321"/>
        <end position="341"/>
    </location>
</feature>
<feature type="transmembrane region" description="Helical" evidence="2">
    <location>
        <begin position="348"/>
        <end position="368"/>
    </location>
</feature>
<feature type="binding site" description="axial binding residue" evidence="2">
    <location>
        <position position="84"/>
    </location>
    <ligand>
        <name>heme b</name>
        <dbReference type="ChEBI" id="CHEBI:60344"/>
        <label>b562</label>
    </ligand>
    <ligandPart>
        <name>Fe</name>
        <dbReference type="ChEBI" id="CHEBI:18248"/>
    </ligandPart>
</feature>
<feature type="binding site" description="axial binding residue" evidence="2">
    <location>
        <position position="98"/>
    </location>
    <ligand>
        <name>heme b</name>
        <dbReference type="ChEBI" id="CHEBI:60344"/>
        <label>b566</label>
    </ligand>
    <ligandPart>
        <name>Fe</name>
        <dbReference type="ChEBI" id="CHEBI:18248"/>
    </ligandPart>
</feature>
<feature type="binding site" description="axial binding residue" evidence="2">
    <location>
        <position position="183"/>
    </location>
    <ligand>
        <name>heme b</name>
        <dbReference type="ChEBI" id="CHEBI:60344"/>
        <label>b562</label>
    </ligand>
    <ligandPart>
        <name>Fe</name>
        <dbReference type="ChEBI" id="CHEBI:18248"/>
    </ligandPart>
</feature>
<feature type="binding site" description="axial binding residue" evidence="2">
    <location>
        <position position="197"/>
    </location>
    <ligand>
        <name>heme b</name>
        <dbReference type="ChEBI" id="CHEBI:60344"/>
        <label>b566</label>
    </ligand>
    <ligandPart>
        <name>Fe</name>
        <dbReference type="ChEBI" id="CHEBI:18248"/>
    </ligandPart>
</feature>
<feature type="binding site" evidence="2">
    <location>
        <position position="202"/>
    </location>
    <ligand>
        <name>a ubiquinone</name>
        <dbReference type="ChEBI" id="CHEBI:16389"/>
    </ligand>
</feature>
<organism>
    <name type="scientific">Corvus brachyrhynchos</name>
    <name type="common">American crow</name>
    <dbReference type="NCBI Taxonomy" id="85066"/>
    <lineage>
        <taxon>Eukaryota</taxon>
        <taxon>Metazoa</taxon>
        <taxon>Chordata</taxon>
        <taxon>Craniata</taxon>
        <taxon>Vertebrata</taxon>
        <taxon>Euteleostomi</taxon>
        <taxon>Archelosauria</taxon>
        <taxon>Archosauria</taxon>
        <taxon>Dinosauria</taxon>
        <taxon>Saurischia</taxon>
        <taxon>Theropoda</taxon>
        <taxon>Coelurosauria</taxon>
        <taxon>Aves</taxon>
        <taxon>Neognathae</taxon>
        <taxon>Neoaves</taxon>
        <taxon>Telluraves</taxon>
        <taxon>Australaves</taxon>
        <taxon>Passeriformes</taxon>
        <taxon>Corvoidea</taxon>
        <taxon>Corvidae</taxon>
        <taxon>Corvus</taxon>
    </lineage>
</organism>
<dbReference type="EMBL" id="AY030112">
    <property type="protein sequence ID" value="AAK50155.1"/>
    <property type="molecule type" value="Genomic_DNA"/>
</dbReference>
<dbReference type="RefSeq" id="YP_009121522.1">
    <property type="nucleotide sequence ID" value="NC_026461.1"/>
</dbReference>
<dbReference type="SMR" id="Q950C7"/>
<dbReference type="GO" id="GO:0005743">
    <property type="term" value="C:mitochondrial inner membrane"/>
    <property type="evidence" value="ECO:0007669"/>
    <property type="project" value="UniProtKB-SubCell"/>
</dbReference>
<dbReference type="GO" id="GO:0045275">
    <property type="term" value="C:respiratory chain complex III"/>
    <property type="evidence" value="ECO:0007669"/>
    <property type="project" value="InterPro"/>
</dbReference>
<dbReference type="GO" id="GO:0046872">
    <property type="term" value="F:metal ion binding"/>
    <property type="evidence" value="ECO:0007669"/>
    <property type="project" value="UniProtKB-KW"/>
</dbReference>
<dbReference type="GO" id="GO:0008121">
    <property type="term" value="F:ubiquinol-cytochrome-c reductase activity"/>
    <property type="evidence" value="ECO:0007669"/>
    <property type="project" value="InterPro"/>
</dbReference>
<dbReference type="GO" id="GO:0006122">
    <property type="term" value="P:mitochondrial electron transport, ubiquinol to cytochrome c"/>
    <property type="evidence" value="ECO:0007669"/>
    <property type="project" value="TreeGrafter"/>
</dbReference>
<dbReference type="CDD" id="cd00290">
    <property type="entry name" value="cytochrome_b_C"/>
    <property type="match status" value="1"/>
</dbReference>
<dbReference type="CDD" id="cd00284">
    <property type="entry name" value="Cytochrome_b_N"/>
    <property type="match status" value="1"/>
</dbReference>
<dbReference type="FunFam" id="1.20.810.10:FF:000002">
    <property type="entry name" value="Cytochrome b"/>
    <property type="match status" value="1"/>
</dbReference>
<dbReference type="Gene3D" id="1.20.810.10">
    <property type="entry name" value="Cytochrome Bc1 Complex, Chain C"/>
    <property type="match status" value="1"/>
</dbReference>
<dbReference type="InterPro" id="IPR005798">
    <property type="entry name" value="Cyt_b/b6_C"/>
</dbReference>
<dbReference type="InterPro" id="IPR036150">
    <property type="entry name" value="Cyt_b/b6_C_sf"/>
</dbReference>
<dbReference type="InterPro" id="IPR005797">
    <property type="entry name" value="Cyt_b/b6_N"/>
</dbReference>
<dbReference type="InterPro" id="IPR027387">
    <property type="entry name" value="Cytb/b6-like_sf"/>
</dbReference>
<dbReference type="InterPro" id="IPR030689">
    <property type="entry name" value="Cytochrome_b"/>
</dbReference>
<dbReference type="InterPro" id="IPR048260">
    <property type="entry name" value="Cytochrome_b_C_euk/bac"/>
</dbReference>
<dbReference type="InterPro" id="IPR048259">
    <property type="entry name" value="Cytochrome_b_N_euk/bac"/>
</dbReference>
<dbReference type="InterPro" id="IPR016174">
    <property type="entry name" value="Di-haem_cyt_TM"/>
</dbReference>
<dbReference type="PANTHER" id="PTHR19271">
    <property type="entry name" value="CYTOCHROME B"/>
    <property type="match status" value="1"/>
</dbReference>
<dbReference type="PANTHER" id="PTHR19271:SF16">
    <property type="entry name" value="CYTOCHROME B"/>
    <property type="match status" value="1"/>
</dbReference>
<dbReference type="Pfam" id="PF00032">
    <property type="entry name" value="Cytochrom_B_C"/>
    <property type="match status" value="1"/>
</dbReference>
<dbReference type="Pfam" id="PF00033">
    <property type="entry name" value="Cytochrome_B"/>
    <property type="match status" value="1"/>
</dbReference>
<dbReference type="PIRSF" id="PIRSF038885">
    <property type="entry name" value="COB"/>
    <property type="match status" value="1"/>
</dbReference>
<dbReference type="SUPFAM" id="SSF81648">
    <property type="entry name" value="a domain/subunit of cytochrome bc1 complex (Ubiquinol-cytochrome c reductase)"/>
    <property type="match status" value="1"/>
</dbReference>
<dbReference type="SUPFAM" id="SSF81342">
    <property type="entry name" value="Transmembrane di-heme cytochromes"/>
    <property type="match status" value="1"/>
</dbReference>
<dbReference type="PROSITE" id="PS51003">
    <property type="entry name" value="CYTB_CTER"/>
    <property type="match status" value="1"/>
</dbReference>
<dbReference type="PROSITE" id="PS51002">
    <property type="entry name" value="CYTB_NTER"/>
    <property type="match status" value="1"/>
</dbReference>
<sequence length="380" mass="42540">MALNLRKNHPLLKIINNSLVDLPTPSNISAWWNFGSLLGLCLITQIITGLLLAMHYTADTSLAFTSVAHTCRNVQFGWLIRNLHANGASFFFICIYLHIGRGIYYGSYLNKETWNIGVILLLTLMATAFVGYVLPWGQMSFWGATVITNLFSAIPYIGQTLVEWLWGGFSVDNPTLTRFFAFHFLLPFVIAGLTLVHLTFLHETGSNNPLGIPSDCDKIPFHPYYSIKDLLGFALMLIPFIALALFSPNLLGDPENFTPANPLATPPHIKPEWYFLFAYAILRSIPNKLGGVLALAASVLILFLMPLLHVSKQRSMTFRPLSQILFWILVADLLILTWVGSQPVEHPFIIIGQLASFTYFAIILILFPIVSALENKMLKL</sequence>
<protein>
    <recommendedName>
        <fullName>Cytochrome b</fullName>
    </recommendedName>
    <alternativeName>
        <fullName>Complex III subunit 3</fullName>
    </alternativeName>
    <alternativeName>
        <fullName>Complex III subunit III</fullName>
    </alternativeName>
    <alternativeName>
        <fullName>Cytochrome b-c1 complex subunit 3</fullName>
    </alternativeName>
    <alternativeName>
        <fullName>Ubiquinol-cytochrome-c reductase complex cytochrome b subunit</fullName>
    </alternativeName>
</protein>
<evidence type="ECO:0000250" key="1"/>
<evidence type="ECO:0000250" key="2">
    <source>
        <dbReference type="UniProtKB" id="P00157"/>
    </source>
</evidence>
<evidence type="ECO:0000255" key="3">
    <source>
        <dbReference type="PROSITE-ProRule" id="PRU00967"/>
    </source>
</evidence>
<evidence type="ECO:0000255" key="4">
    <source>
        <dbReference type="PROSITE-ProRule" id="PRU00968"/>
    </source>
</evidence>
<reference key="1">
    <citation type="journal article" date="2001" name="Mol. Phylogenet. Evol.">
        <title>Higher-level phylogeny of New World vireos (Aves: Vireonidae) based on sequences of multiple mitochondrial DNA genes.</title>
        <authorList>
            <person name="Cicero C."/>
            <person name="Johnson N.K."/>
        </authorList>
    </citation>
    <scope>NUCLEOTIDE SEQUENCE [GENOMIC DNA]</scope>
    <source>
        <strain>Isolate Cornell Univ. 48424</strain>
    </source>
</reference>
<keyword id="KW-0249">Electron transport</keyword>
<keyword id="KW-0349">Heme</keyword>
<keyword id="KW-0408">Iron</keyword>
<keyword id="KW-0472">Membrane</keyword>
<keyword id="KW-0479">Metal-binding</keyword>
<keyword id="KW-0496">Mitochondrion</keyword>
<keyword id="KW-0999">Mitochondrion inner membrane</keyword>
<keyword id="KW-0679">Respiratory chain</keyword>
<keyword id="KW-0812">Transmembrane</keyword>
<keyword id="KW-1133">Transmembrane helix</keyword>
<keyword id="KW-0813">Transport</keyword>
<keyword id="KW-0830">Ubiquinone</keyword>
<name>CYB_CORBR</name>
<comment type="function">
    <text evidence="2">Component of the ubiquinol-cytochrome c reductase complex (complex III or cytochrome b-c1 complex) that is part of the mitochondrial respiratory chain. The b-c1 complex mediates electron transfer from ubiquinol to cytochrome c. Contributes to the generation of a proton gradient across the mitochondrial membrane that is then used for ATP synthesis.</text>
</comment>
<comment type="cofactor">
    <cofactor evidence="2">
        <name>heme b</name>
        <dbReference type="ChEBI" id="CHEBI:60344"/>
    </cofactor>
    <text evidence="2">Binds 2 heme b groups non-covalently.</text>
</comment>
<comment type="subunit">
    <text evidence="2">The cytochrome bc1 complex contains 11 subunits: 3 respiratory subunits (MT-CYB, CYC1 and UQCRFS1), 2 core proteins (UQCRC1 and UQCRC2) and 6 low-molecular weight proteins (UQCRH/QCR6, UQCRB/QCR7, UQCRQ/QCR8, UQCR10/QCR9, UQCR11/QCR10 and a cleavage product of UQCRFS1). This cytochrome bc1 complex then forms a dimer.</text>
</comment>
<comment type="subcellular location">
    <subcellularLocation>
        <location evidence="2">Mitochondrion inner membrane</location>
        <topology evidence="2">Multi-pass membrane protein</topology>
    </subcellularLocation>
</comment>
<comment type="miscellaneous">
    <text evidence="1">Heme 1 (or BL or b562) is low-potential and absorbs at about 562 nm, and heme 2 (or BH or b566) is high-potential and absorbs at about 566 nm.</text>
</comment>
<comment type="similarity">
    <text evidence="3 4">Belongs to the cytochrome b family.</text>
</comment>
<comment type="caution">
    <text evidence="2">The full-length protein contains only eight transmembrane helices, not nine as predicted by bioinformatics tools.</text>
</comment>